<accession>A0L2M8</accession>
<gene>
    <name evidence="1" type="primary">mobA</name>
    <name type="ordered locus">Shewana3_4080</name>
</gene>
<comment type="function">
    <text evidence="1">Transfers a GMP moiety from GTP to Mo-molybdopterin (Mo-MPT) cofactor (Moco or molybdenum cofactor) to form Mo-molybdopterin guanine dinucleotide (Mo-MGD) cofactor.</text>
</comment>
<comment type="catalytic activity">
    <reaction evidence="1">
        <text>Mo-molybdopterin + GTP + H(+) = Mo-molybdopterin guanine dinucleotide + diphosphate</text>
        <dbReference type="Rhea" id="RHEA:34243"/>
        <dbReference type="ChEBI" id="CHEBI:15378"/>
        <dbReference type="ChEBI" id="CHEBI:33019"/>
        <dbReference type="ChEBI" id="CHEBI:37565"/>
        <dbReference type="ChEBI" id="CHEBI:71302"/>
        <dbReference type="ChEBI" id="CHEBI:71310"/>
        <dbReference type="EC" id="2.7.7.77"/>
    </reaction>
</comment>
<comment type="cofactor">
    <cofactor evidence="1">
        <name>Mg(2+)</name>
        <dbReference type="ChEBI" id="CHEBI:18420"/>
    </cofactor>
</comment>
<comment type="subunit">
    <text evidence="1">Monomer.</text>
</comment>
<comment type="subcellular location">
    <subcellularLocation>
        <location evidence="1">Cytoplasm</location>
    </subcellularLocation>
</comment>
<comment type="domain">
    <text evidence="1">The N-terminal domain determines nucleotide recognition and specific binding, while the C-terminal domain determines the specific binding to the target protein.</text>
</comment>
<comment type="similarity">
    <text evidence="1">Belongs to the MobA family.</text>
</comment>
<dbReference type="EC" id="2.7.7.77" evidence="1"/>
<dbReference type="EMBL" id="CP000469">
    <property type="protein sequence ID" value="ABK50297.1"/>
    <property type="molecule type" value="Genomic_DNA"/>
</dbReference>
<dbReference type="RefSeq" id="WP_011718790.1">
    <property type="nucleotide sequence ID" value="NC_008577.1"/>
</dbReference>
<dbReference type="SMR" id="A0L2M8"/>
<dbReference type="STRING" id="94122.Shewana3_4080"/>
<dbReference type="KEGG" id="shn:Shewana3_4080"/>
<dbReference type="eggNOG" id="COG0746">
    <property type="taxonomic scope" value="Bacteria"/>
</dbReference>
<dbReference type="HOGENOM" id="CLU_055597_5_1_6"/>
<dbReference type="OrthoDB" id="9788394at2"/>
<dbReference type="Proteomes" id="UP000002589">
    <property type="component" value="Chromosome"/>
</dbReference>
<dbReference type="GO" id="GO:0005737">
    <property type="term" value="C:cytoplasm"/>
    <property type="evidence" value="ECO:0007669"/>
    <property type="project" value="UniProtKB-SubCell"/>
</dbReference>
<dbReference type="GO" id="GO:0005525">
    <property type="term" value="F:GTP binding"/>
    <property type="evidence" value="ECO:0007669"/>
    <property type="project" value="UniProtKB-UniRule"/>
</dbReference>
<dbReference type="GO" id="GO:0046872">
    <property type="term" value="F:metal ion binding"/>
    <property type="evidence" value="ECO:0007669"/>
    <property type="project" value="UniProtKB-KW"/>
</dbReference>
<dbReference type="GO" id="GO:0061603">
    <property type="term" value="F:molybdenum cofactor guanylyltransferase activity"/>
    <property type="evidence" value="ECO:0007669"/>
    <property type="project" value="UniProtKB-EC"/>
</dbReference>
<dbReference type="GO" id="GO:1902758">
    <property type="term" value="P:bis(molybdopterin guanine dinucleotide)molybdenum biosynthetic process"/>
    <property type="evidence" value="ECO:0007669"/>
    <property type="project" value="TreeGrafter"/>
</dbReference>
<dbReference type="CDD" id="cd02503">
    <property type="entry name" value="MobA"/>
    <property type="match status" value="1"/>
</dbReference>
<dbReference type="FunFam" id="3.90.550.10:FF:000338">
    <property type="entry name" value="Molybdenum cofactor guanylyltransferase"/>
    <property type="match status" value="1"/>
</dbReference>
<dbReference type="Gene3D" id="3.90.550.10">
    <property type="entry name" value="Spore Coat Polysaccharide Biosynthesis Protein SpsA, Chain A"/>
    <property type="match status" value="1"/>
</dbReference>
<dbReference type="HAMAP" id="MF_00316">
    <property type="entry name" value="MobA"/>
    <property type="match status" value="1"/>
</dbReference>
<dbReference type="InterPro" id="IPR025877">
    <property type="entry name" value="MobA-like_NTP_Trfase"/>
</dbReference>
<dbReference type="InterPro" id="IPR013482">
    <property type="entry name" value="Molybde_CF_guanTrfase"/>
</dbReference>
<dbReference type="InterPro" id="IPR029044">
    <property type="entry name" value="Nucleotide-diphossugar_trans"/>
</dbReference>
<dbReference type="NCBIfam" id="TIGR02665">
    <property type="entry name" value="molyb_mobA"/>
    <property type="match status" value="1"/>
</dbReference>
<dbReference type="PANTHER" id="PTHR19136">
    <property type="entry name" value="MOLYBDENUM COFACTOR GUANYLYLTRANSFERASE"/>
    <property type="match status" value="1"/>
</dbReference>
<dbReference type="PANTHER" id="PTHR19136:SF81">
    <property type="entry name" value="MOLYBDENUM COFACTOR GUANYLYLTRANSFERASE"/>
    <property type="match status" value="1"/>
</dbReference>
<dbReference type="Pfam" id="PF12804">
    <property type="entry name" value="NTP_transf_3"/>
    <property type="match status" value="1"/>
</dbReference>
<dbReference type="SUPFAM" id="SSF53448">
    <property type="entry name" value="Nucleotide-diphospho-sugar transferases"/>
    <property type="match status" value="1"/>
</dbReference>
<evidence type="ECO:0000255" key="1">
    <source>
        <dbReference type="HAMAP-Rule" id="MF_00316"/>
    </source>
</evidence>
<name>MOBA_SHESA</name>
<sequence length="197" mass="21633">MSLQIDAVILAGGMARRMGGDDKGLVELNGKAMIEHTIERIKPQVKEILINANRNQTRYAEFGFTVLSDEHTGFLGPLAGTITAMGHTQADYLLVVPCDCPLLPRDLVARLLAAIEANDAELAVASDGEREQPVVMLLKPSLRESMTAFLEAGERKIDFWYAKHRFAVAAFADQPNAFVNVNTPEQKQRLAAEINQS</sequence>
<keyword id="KW-0963">Cytoplasm</keyword>
<keyword id="KW-0342">GTP-binding</keyword>
<keyword id="KW-0460">Magnesium</keyword>
<keyword id="KW-0479">Metal-binding</keyword>
<keyword id="KW-0501">Molybdenum cofactor biosynthesis</keyword>
<keyword id="KW-0547">Nucleotide-binding</keyword>
<keyword id="KW-0808">Transferase</keyword>
<feature type="chain" id="PRO_1000019151" description="Molybdenum cofactor guanylyltransferase">
    <location>
        <begin position="1"/>
        <end position="197"/>
    </location>
</feature>
<feature type="binding site" evidence="1">
    <location>
        <begin position="10"/>
        <end position="12"/>
    </location>
    <ligand>
        <name>GTP</name>
        <dbReference type="ChEBI" id="CHEBI:37565"/>
    </ligand>
</feature>
<feature type="binding site" evidence="1">
    <location>
        <position position="23"/>
    </location>
    <ligand>
        <name>GTP</name>
        <dbReference type="ChEBI" id="CHEBI:37565"/>
    </ligand>
</feature>
<feature type="binding site" evidence="1">
    <location>
        <position position="51"/>
    </location>
    <ligand>
        <name>GTP</name>
        <dbReference type="ChEBI" id="CHEBI:37565"/>
    </ligand>
</feature>
<feature type="binding site" evidence="1">
    <location>
        <position position="69"/>
    </location>
    <ligand>
        <name>GTP</name>
        <dbReference type="ChEBI" id="CHEBI:37565"/>
    </ligand>
</feature>
<feature type="binding site" evidence="1">
    <location>
        <position position="99"/>
    </location>
    <ligand>
        <name>GTP</name>
        <dbReference type="ChEBI" id="CHEBI:37565"/>
    </ligand>
</feature>
<feature type="binding site" evidence="1">
    <location>
        <position position="99"/>
    </location>
    <ligand>
        <name>Mg(2+)</name>
        <dbReference type="ChEBI" id="CHEBI:18420"/>
    </ligand>
</feature>
<reference key="1">
    <citation type="submission" date="2006-09" db="EMBL/GenBank/DDBJ databases">
        <title>Complete sequence of chromosome 1 of Shewanella sp. ANA-3.</title>
        <authorList>
            <person name="Copeland A."/>
            <person name="Lucas S."/>
            <person name="Lapidus A."/>
            <person name="Barry K."/>
            <person name="Detter J.C."/>
            <person name="Glavina del Rio T."/>
            <person name="Hammon N."/>
            <person name="Israni S."/>
            <person name="Dalin E."/>
            <person name="Tice H."/>
            <person name="Pitluck S."/>
            <person name="Chertkov O."/>
            <person name="Brettin T."/>
            <person name="Bruce D."/>
            <person name="Han C."/>
            <person name="Tapia R."/>
            <person name="Gilna P."/>
            <person name="Schmutz J."/>
            <person name="Larimer F."/>
            <person name="Land M."/>
            <person name="Hauser L."/>
            <person name="Kyrpides N."/>
            <person name="Kim E."/>
            <person name="Newman D."/>
            <person name="Salticov C."/>
            <person name="Konstantinidis K."/>
            <person name="Klappenback J."/>
            <person name="Tiedje J."/>
            <person name="Richardson P."/>
        </authorList>
    </citation>
    <scope>NUCLEOTIDE SEQUENCE [LARGE SCALE GENOMIC DNA]</scope>
    <source>
        <strain>ANA-3</strain>
    </source>
</reference>
<organism>
    <name type="scientific">Shewanella sp. (strain ANA-3)</name>
    <dbReference type="NCBI Taxonomy" id="94122"/>
    <lineage>
        <taxon>Bacteria</taxon>
        <taxon>Pseudomonadati</taxon>
        <taxon>Pseudomonadota</taxon>
        <taxon>Gammaproteobacteria</taxon>
        <taxon>Alteromonadales</taxon>
        <taxon>Shewanellaceae</taxon>
        <taxon>Shewanella</taxon>
    </lineage>
</organism>
<proteinExistence type="inferred from homology"/>
<protein>
    <recommendedName>
        <fullName evidence="1">Molybdenum cofactor guanylyltransferase</fullName>
        <shortName evidence="1">MoCo guanylyltransferase</shortName>
        <ecNumber evidence="1">2.7.7.77</ecNumber>
    </recommendedName>
    <alternativeName>
        <fullName evidence="1">GTP:molybdopterin guanylyltransferase</fullName>
    </alternativeName>
    <alternativeName>
        <fullName evidence="1">Mo-MPT guanylyltransferase</fullName>
    </alternativeName>
    <alternativeName>
        <fullName evidence="1">Molybdopterin guanylyltransferase</fullName>
    </alternativeName>
    <alternativeName>
        <fullName evidence="1">Molybdopterin-guanine dinucleotide synthase</fullName>
        <shortName evidence="1">MGD synthase</shortName>
    </alternativeName>
</protein>